<name>MPAF2_PENBR</name>
<sequence length="548" mass="58191">MVEILDYTKALEVLKEYPSGDGLHVDTLLDSDNHGALTYNDFLILPGSITFSAADVSLDTKVTRRFTIKAPLLSSPMDTVTEHNMAIHMALLGGLGVIHNNCPPDDQAEMVRKVKRYENGFILDPVVLSPSTTVAEAKELKTKWNFGGFPVTGKTHYLSSFGKLASSDSFSLLEKGTLHSKLLGIVTSRDIQFHKTPEDPVTAVMSTELVTAPAGTTLAEANEVLRSSKKGKLPIVDKDGLLVSLLSRSDLMKNIHYPLASKLPSKQLLCAAAISTHDADKVRLQKLVDAGLDIVVVDSSQGNSMYQIAMIKWIKSTFPDIDIIAGNIVTREQAAALIAAGADGLRIGMGSGSACITQEVMAVGRPQAASVRSVSAFAARFGVPTIADGGVQNLGHIVKGLALGASAVMMGSLLAGTTESPGEYYVSNEGQLVKAFRGMGSIAVMEDKGKSGGGKNAGASRYFSENDKVKVAQGVAGSVVDRGSITQYVPYLVAGIQHSLQDIGVQDLEALHNGVNNGQVRFEMRSASAQTEGNVHGLHSHEKKLYSS</sequence>
<reference key="1">
    <citation type="journal article" date="2015" name="ChemBioChem">
        <title>Functional characterization of MpaG', the O-methyltransferase involved in the biosynthesis of mycophenolic acid.</title>
        <authorList>
            <person name="Zhang W."/>
            <person name="Cao S."/>
            <person name="Qiu L."/>
            <person name="Qi F."/>
            <person name="Li Z."/>
            <person name="Yang Y."/>
            <person name="Huang S."/>
            <person name="Bai F."/>
            <person name="Liu C."/>
            <person name="Wan X."/>
            <person name="Li S."/>
        </authorList>
    </citation>
    <scope>NUCLEOTIDE SEQUENCE [GENOMIC DNA]</scope>
    <source>
        <strain>NRRL864</strain>
    </source>
</reference>
<feature type="chain" id="PRO_0000451893" description="Inosine-5'-monophosphate dehydrogenase">
    <location>
        <begin position="1"/>
        <end position="548"/>
    </location>
</feature>
<feature type="domain" description="CBS 1" evidence="3">
    <location>
        <begin position="121"/>
        <end position="201"/>
    </location>
</feature>
<feature type="domain" description="CBS 2" evidence="3">
    <location>
        <begin position="205"/>
        <end position="261"/>
    </location>
</feature>
<feature type="region of interest" description="Disordered" evidence="4">
    <location>
        <begin position="527"/>
        <end position="548"/>
    </location>
</feature>
<feature type="compositionally biased region" description="Basic and acidic residues" evidence="4">
    <location>
        <begin position="539"/>
        <end position="548"/>
    </location>
</feature>
<feature type="active site" description="Thioimidate intermediate" evidence="2">
    <location>
        <position position="355"/>
    </location>
</feature>
<feature type="active site" description="Proton acceptor" evidence="2">
    <location>
        <position position="461"/>
    </location>
</feature>
<feature type="binding site" evidence="2">
    <location>
        <begin position="298"/>
        <end position="300"/>
    </location>
    <ligand>
        <name>NAD(+)</name>
        <dbReference type="ChEBI" id="CHEBI:57540"/>
    </ligand>
</feature>
<feature type="binding site" evidence="2">
    <location>
        <begin position="348"/>
        <end position="350"/>
    </location>
    <ligand>
        <name>NAD(+)</name>
        <dbReference type="ChEBI" id="CHEBI:57540"/>
    </ligand>
</feature>
<feature type="binding site" description="in other chain" evidence="2">
    <location>
        <position position="350"/>
    </location>
    <ligand>
        <name>K(+)</name>
        <dbReference type="ChEBI" id="CHEBI:29103"/>
        <note>ligand shared between two tetrameric partners</note>
    </ligand>
</feature>
<feature type="binding site" description="in other chain" evidence="2">
    <location>
        <position position="352"/>
    </location>
    <ligand>
        <name>K(+)</name>
        <dbReference type="ChEBI" id="CHEBI:29103"/>
        <note>ligand shared between two tetrameric partners</note>
    </ligand>
</feature>
<feature type="binding site" evidence="2">
    <location>
        <position position="353"/>
    </location>
    <ligand>
        <name>IMP</name>
        <dbReference type="ChEBI" id="CHEBI:58053"/>
    </ligand>
</feature>
<feature type="binding site" description="in other chain" evidence="2">
    <location>
        <position position="355"/>
    </location>
    <ligand>
        <name>K(+)</name>
        <dbReference type="ChEBI" id="CHEBI:29103"/>
        <note>ligand shared between two tetrameric partners</note>
    </ligand>
</feature>
<feature type="binding site" evidence="2">
    <location>
        <begin position="388"/>
        <end position="390"/>
    </location>
    <ligand>
        <name>IMP</name>
        <dbReference type="ChEBI" id="CHEBI:58053"/>
    </ligand>
</feature>
<feature type="binding site" evidence="2">
    <location>
        <begin position="411"/>
        <end position="412"/>
    </location>
    <ligand>
        <name>IMP</name>
        <dbReference type="ChEBI" id="CHEBI:58053"/>
    </ligand>
</feature>
<feature type="binding site" evidence="2">
    <location>
        <position position="473"/>
    </location>
    <ligand>
        <name>IMP</name>
        <dbReference type="ChEBI" id="CHEBI:58053"/>
    </ligand>
</feature>
<feature type="binding site" evidence="2">
    <location>
        <position position="528"/>
    </location>
    <ligand>
        <name>K(+)</name>
        <dbReference type="ChEBI" id="CHEBI:29103"/>
        <note>ligand shared between two tetrameric partners</note>
    </ligand>
</feature>
<dbReference type="EC" id="1.1.1.205" evidence="2"/>
<dbReference type="EMBL" id="KM595305">
    <property type="protein sequence ID" value="AJG44383.1"/>
    <property type="molecule type" value="Genomic_DNA"/>
</dbReference>
<dbReference type="SMR" id="A0A0B5L585"/>
<dbReference type="UniPathway" id="UPA00601">
    <property type="reaction ID" value="UER00295"/>
</dbReference>
<dbReference type="GO" id="GO:0005737">
    <property type="term" value="C:cytoplasm"/>
    <property type="evidence" value="ECO:0007669"/>
    <property type="project" value="UniProtKB-SubCell"/>
</dbReference>
<dbReference type="GO" id="GO:0003938">
    <property type="term" value="F:IMP dehydrogenase activity"/>
    <property type="evidence" value="ECO:0007669"/>
    <property type="project" value="UniProtKB-UniRule"/>
</dbReference>
<dbReference type="GO" id="GO:0046872">
    <property type="term" value="F:metal ion binding"/>
    <property type="evidence" value="ECO:0007669"/>
    <property type="project" value="UniProtKB-UniRule"/>
</dbReference>
<dbReference type="GO" id="GO:0000166">
    <property type="term" value="F:nucleotide binding"/>
    <property type="evidence" value="ECO:0007669"/>
    <property type="project" value="UniProtKB-UniRule"/>
</dbReference>
<dbReference type="GO" id="GO:0006177">
    <property type="term" value="P:GMP biosynthetic process"/>
    <property type="evidence" value="ECO:0007669"/>
    <property type="project" value="UniProtKB-UniRule"/>
</dbReference>
<dbReference type="GO" id="GO:0006183">
    <property type="term" value="P:GTP biosynthetic process"/>
    <property type="evidence" value="ECO:0007669"/>
    <property type="project" value="TreeGrafter"/>
</dbReference>
<dbReference type="GO" id="GO:0140729">
    <property type="term" value="P:self-resistance to endogenously produced metabolite"/>
    <property type="evidence" value="ECO:0000250"/>
    <property type="project" value="GO_Central"/>
</dbReference>
<dbReference type="CDD" id="cd04601">
    <property type="entry name" value="CBS_pair_IMPDH"/>
    <property type="match status" value="1"/>
</dbReference>
<dbReference type="CDD" id="cd00381">
    <property type="entry name" value="IMPDH"/>
    <property type="match status" value="1"/>
</dbReference>
<dbReference type="Gene3D" id="3.20.20.70">
    <property type="entry name" value="Aldolase class I"/>
    <property type="match status" value="1"/>
</dbReference>
<dbReference type="HAMAP" id="MF_01964">
    <property type="entry name" value="IMPDH"/>
    <property type="match status" value="1"/>
</dbReference>
<dbReference type="InterPro" id="IPR013785">
    <property type="entry name" value="Aldolase_TIM"/>
</dbReference>
<dbReference type="InterPro" id="IPR000644">
    <property type="entry name" value="CBS_dom"/>
</dbReference>
<dbReference type="InterPro" id="IPR046342">
    <property type="entry name" value="CBS_dom_sf"/>
</dbReference>
<dbReference type="InterPro" id="IPR005990">
    <property type="entry name" value="IMP_DH"/>
</dbReference>
<dbReference type="InterPro" id="IPR015875">
    <property type="entry name" value="IMP_DH/GMP_Rdtase_CS"/>
</dbReference>
<dbReference type="InterPro" id="IPR001093">
    <property type="entry name" value="IMP_DH_GMPRt"/>
</dbReference>
<dbReference type="NCBIfam" id="TIGR01302">
    <property type="entry name" value="IMP_dehydrog"/>
    <property type="match status" value="1"/>
</dbReference>
<dbReference type="PANTHER" id="PTHR11911:SF111">
    <property type="entry name" value="INOSINE-5'-MONOPHOSPHATE DEHYDROGENASE"/>
    <property type="match status" value="1"/>
</dbReference>
<dbReference type="PANTHER" id="PTHR11911">
    <property type="entry name" value="INOSINE-5-MONOPHOSPHATE DEHYDROGENASE RELATED"/>
    <property type="match status" value="1"/>
</dbReference>
<dbReference type="Pfam" id="PF00571">
    <property type="entry name" value="CBS"/>
    <property type="match status" value="1"/>
</dbReference>
<dbReference type="Pfam" id="PF00478">
    <property type="entry name" value="IMPDH"/>
    <property type="match status" value="1"/>
</dbReference>
<dbReference type="PIRSF" id="PIRSF000130">
    <property type="entry name" value="IMPDH"/>
    <property type="match status" value="1"/>
</dbReference>
<dbReference type="SMART" id="SM00116">
    <property type="entry name" value="CBS"/>
    <property type="match status" value="2"/>
</dbReference>
<dbReference type="SMART" id="SM01240">
    <property type="entry name" value="IMPDH"/>
    <property type="match status" value="1"/>
</dbReference>
<dbReference type="SUPFAM" id="SSF54631">
    <property type="entry name" value="CBS-domain pair"/>
    <property type="match status" value="1"/>
</dbReference>
<dbReference type="SUPFAM" id="SSF51412">
    <property type="entry name" value="Inosine monophosphate dehydrogenase (IMPDH)"/>
    <property type="match status" value="1"/>
</dbReference>
<dbReference type="PROSITE" id="PS51371">
    <property type="entry name" value="CBS"/>
    <property type="match status" value="2"/>
</dbReference>
<dbReference type="PROSITE" id="PS00487">
    <property type="entry name" value="IMP_DH_GMP_RED"/>
    <property type="match status" value="1"/>
</dbReference>
<gene>
    <name evidence="5" type="primary">mpaF'</name>
</gene>
<protein>
    <recommendedName>
        <fullName evidence="2">Inosine-5'-monophosphate dehydrogenase</fullName>
        <shortName evidence="2">IMP dehydrogenase</shortName>
        <shortName evidence="2">IMPD</shortName>
        <shortName evidence="2">IMPDH</shortName>
        <ecNumber evidence="2">1.1.1.205</ecNumber>
    </recommendedName>
    <alternativeName>
        <fullName evidence="5">Mycophenolic acid biosynthesis cluster protein F'</fullName>
    </alternativeName>
</protein>
<accession>A0A0B5L585</accession>
<proteinExistence type="inferred from homology"/>
<comment type="function">
    <text evidence="1 2">Catalyzes the conversion of inosine 5'-phosphate (IMP) to xanthosine 5'-phosphate (XMP), the first committed and rate-limiting step in the de novo synthesis of guanine nucleotides, and therefore plays an important role in the regulation of cell growth (By similarity). Part of the gene cluster that mediates the biosynthesis of mycophenolic acid (MPA), the first isolated antibiotic natural product in the world (By similarity). Does not play a role in the biosynthesis of MPA, but is involved in self resistance to MPA, since MPA acts as an inhibitor of IMP dehydrogenases (By similarity).</text>
</comment>
<comment type="catalytic activity">
    <reaction evidence="2">
        <text>IMP + NAD(+) + H2O = XMP + NADH + H(+)</text>
        <dbReference type="Rhea" id="RHEA:11708"/>
        <dbReference type="ChEBI" id="CHEBI:15377"/>
        <dbReference type="ChEBI" id="CHEBI:15378"/>
        <dbReference type="ChEBI" id="CHEBI:57464"/>
        <dbReference type="ChEBI" id="CHEBI:57540"/>
        <dbReference type="ChEBI" id="CHEBI:57945"/>
        <dbReference type="ChEBI" id="CHEBI:58053"/>
        <dbReference type="EC" id="1.1.1.205"/>
    </reaction>
</comment>
<comment type="cofactor">
    <cofactor evidence="2">
        <name>K(+)</name>
        <dbReference type="ChEBI" id="CHEBI:29103"/>
    </cofactor>
</comment>
<comment type="activity regulation">
    <text evidence="2">Mycophenolic acid (MPA) is a non-competitive inhibitor that prevents formation of the closed enzyme conformation by binding to the same site as the amobile flap. In contrast, mizoribine monophosphate (MZP) is a competitive inhibitor that induces the closed conformation. MPA is a potent inhibitor of mammalian IMPDHs but a poor inhibitor of the bacterial enzymes. MZP is a more potent inhibitor of bacterial IMPDH.</text>
</comment>
<comment type="pathway">
    <text evidence="2">Purine metabolism; XMP biosynthesis via de novo pathway; XMP from IMP: step 1/1.</text>
</comment>
<comment type="subunit">
    <text evidence="2">Homotetramer.</text>
</comment>
<comment type="subcellular location">
    <subcellularLocation>
        <location evidence="2">Cytoplasm</location>
    </subcellularLocation>
</comment>
<comment type="similarity">
    <text evidence="2">Belongs to the IMPDH/GMPR family.</text>
</comment>
<keyword id="KW-0129">CBS domain</keyword>
<keyword id="KW-0963">Cytoplasm</keyword>
<keyword id="KW-0332">GMP biosynthesis</keyword>
<keyword id="KW-0479">Metal-binding</keyword>
<keyword id="KW-0520">NAD</keyword>
<keyword id="KW-0560">Oxidoreductase</keyword>
<keyword id="KW-0630">Potassium</keyword>
<keyword id="KW-0658">Purine biosynthesis</keyword>
<keyword id="KW-0677">Repeat</keyword>
<evidence type="ECO:0000250" key="1">
    <source>
        <dbReference type="UniProtKB" id="W6QIT2"/>
    </source>
</evidence>
<evidence type="ECO:0000255" key="2">
    <source>
        <dbReference type="HAMAP-Rule" id="MF_03156"/>
    </source>
</evidence>
<evidence type="ECO:0000255" key="3">
    <source>
        <dbReference type="PROSITE-ProRule" id="PRU00703"/>
    </source>
</evidence>
<evidence type="ECO:0000256" key="4">
    <source>
        <dbReference type="SAM" id="MobiDB-lite"/>
    </source>
</evidence>
<evidence type="ECO:0000303" key="5">
    <source>
    </source>
</evidence>
<organism>
    <name type="scientific">Penicillium brevicompactum</name>
    <dbReference type="NCBI Taxonomy" id="5074"/>
    <lineage>
        <taxon>Eukaryota</taxon>
        <taxon>Fungi</taxon>
        <taxon>Dikarya</taxon>
        <taxon>Ascomycota</taxon>
        <taxon>Pezizomycotina</taxon>
        <taxon>Eurotiomycetes</taxon>
        <taxon>Eurotiomycetidae</taxon>
        <taxon>Eurotiales</taxon>
        <taxon>Aspergillaceae</taxon>
        <taxon>Penicillium</taxon>
    </lineage>
</organism>